<comment type="function">
    <text evidence="2">Catalyzes the reversible phosphorolytic breakdown of the N-glycosidic bond in the beta-(deoxy)ribonucleoside molecules, with the formation of the corresponding free purine bases and pentose-1-phosphate.</text>
</comment>
<comment type="catalytic activity">
    <reaction evidence="2">
        <text>a purine D-ribonucleoside + phosphate = a purine nucleobase + alpha-D-ribose 1-phosphate</text>
        <dbReference type="Rhea" id="RHEA:19805"/>
        <dbReference type="ChEBI" id="CHEBI:26386"/>
        <dbReference type="ChEBI" id="CHEBI:43474"/>
        <dbReference type="ChEBI" id="CHEBI:57720"/>
        <dbReference type="ChEBI" id="CHEBI:142355"/>
        <dbReference type="EC" id="2.4.2.1"/>
    </reaction>
</comment>
<comment type="catalytic activity">
    <reaction evidence="2">
        <text>a purine 2'-deoxy-D-ribonucleoside + phosphate = a purine nucleobase + 2-deoxy-alpha-D-ribose 1-phosphate</text>
        <dbReference type="Rhea" id="RHEA:36431"/>
        <dbReference type="ChEBI" id="CHEBI:26386"/>
        <dbReference type="ChEBI" id="CHEBI:43474"/>
        <dbReference type="ChEBI" id="CHEBI:57259"/>
        <dbReference type="ChEBI" id="CHEBI:142361"/>
        <dbReference type="EC" id="2.4.2.1"/>
    </reaction>
</comment>
<comment type="subunit">
    <text evidence="2">Homohexamer; trimer of homodimers.</text>
</comment>
<comment type="similarity">
    <text evidence="2">Belongs to the PNP/UDP phosphorylase family.</text>
</comment>
<reference key="1">
    <citation type="journal article" date="2010" name="Genome Biol.">
        <title>Structure and dynamics of the pan-genome of Streptococcus pneumoniae and closely related species.</title>
        <authorList>
            <person name="Donati C."/>
            <person name="Hiller N.L."/>
            <person name="Tettelin H."/>
            <person name="Muzzi A."/>
            <person name="Croucher N.J."/>
            <person name="Angiuoli S.V."/>
            <person name="Oggioni M."/>
            <person name="Dunning Hotopp J.C."/>
            <person name="Hu F.Z."/>
            <person name="Riley D.R."/>
            <person name="Covacci A."/>
            <person name="Mitchell T.J."/>
            <person name="Bentley S.D."/>
            <person name="Kilian M."/>
            <person name="Ehrlich G.D."/>
            <person name="Rappuoli R."/>
            <person name="Moxon E.R."/>
            <person name="Masignani V."/>
        </authorList>
    </citation>
    <scope>NUCLEOTIDE SEQUENCE [LARGE SCALE GENOMIC DNA]</scope>
    <source>
        <strain>P1031</strain>
    </source>
</reference>
<evidence type="ECO:0000250" key="1">
    <source>
        <dbReference type="UniProtKB" id="P50389"/>
    </source>
</evidence>
<evidence type="ECO:0000255" key="2">
    <source>
        <dbReference type="HAMAP-Rule" id="MF_01627"/>
    </source>
</evidence>
<keyword id="KW-0328">Glycosyltransferase</keyword>
<keyword id="KW-0808">Transferase</keyword>
<dbReference type="EC" id="2.4.2.1" evidence="2"/>
<dbReference type="EMBL" id="CP000920">
    <property type="protein sequence ID" value="ACO22057.1"/>
    <property type="molecule type" value="Genomic_DNA"/>
</dbReference>
<dbReference type="RefSeq" id="WP_000022100.1">
    <property type="nucleotide sequence ID" value="NC_012467.1"/>
</dbReference>
<dbReference type="SMR" id="C1CJS5"/>
<dbReference type="GeneID" id="45653806"/>
<dbReference type="KEGG" id="spp:SPP_0842"/>
<dbReference type="HOGENOM" id="CLU_068457_2_0_9"/>
<dbReference type="GO" id="GO:0005829">
    <property type="term" value="C:cytosol"/>
    <property type="evidence" value="ECO:0007669"/>
    <property type="project" value="TreeGrafter"/>
</dbReference>
<dbReference type="GO" id="GO:0004731">
    <property type="term" value="F:purine-nucleoside phosphorylase activity"/>
    <property type="evidence" value="ECO:0007669"/>
    <property type="project" value="UniProtKB-UniRule"/>
</dbReference>
<dbReference type="GO" id="GO:0006152">
    <property type="term" value="P:purine nucleoside catabolic process"/>
    <property type="evidence" value="ECO:0007669"/>
    <property type="project" value="TreeGrafter"/>
</dbReference>
<dbReference type="CDD" id="cd09006">
    <property type="entry name" value="PNP_EcPNPI-like"/>
    <property type="match status" value="1"/>
</dbReference>
<dbReference type="Gene3D" id="3.40.50.1580">
    <property type="entry name" value="Nucleoside phosphorylase domain"/>
    <property type="match status" value="1"/>
</dbReference>
<dbReference type="HAMAP" id="MF_01627">
    <property type="entry name" value="Pur_nucleosid_phosp"/>
    <property type="match status" value="1"/>
</dbReference>
<dbReference type="InterPro" id="IPR004402">
    <property type="entry name" value="DeoD-type"/>
</dbReference>
<dbReference type="InterPro" id="IPR018016">
    <property type="entry name" value="Nucleoside_phosphorylase_CS"/>
</dbReference>
<dbReference type="InterPro" id="IPR000845">
    <property type="entry name" value="Nucleoside_phosphorylase_d"/>
</dbReference>
<dbReference type="InterPro" id="IPR035994">
    <property type="entry name" value="Nucleoside_phosphorylase_sf"/>
</dbReference>
<dbReference type="NCBIfam" id="TIGR00107">
    <property type="entry name" value="deoD"/>
    <property type="match status" value="1"/>
</dbReference>
<dbReference type="NCBIfam" id="NF004489">
    <property type="entry name" value="PRK05819.1"/>
    <property type="match status" value="1"/>
</dbReference>
<dbReference type="PANTHER" id="PTHR43691:SF11">
    <property type="entry name" value="FI09636P-RELATED"/>
    <property type="match status" value="1"/>
</dbReference>
<dbReference type="PANTHER" id="PTHR43691">
    <property type="entry name" value="URIDINE PHOSPHORYLASE"/>
    <property type="match status" value="1"/>
</dbReference>
<dbReference type="Pfam" id="PF01048">
    <property type="entry name" value="PNP_UDP_1"/>
    <property type="match status" value="1"/>
</dbReference>
<dbReference type="SUPFAM" id="SSF53167">
    <property type="entry name" value="Purine and uridine phosphorylases"/>
    <property type="match status" value="1"/>
</dbReference>
<dbReference type="PROSITE" id="PS01232">
    <property type="entry name" value="PNP_UDP_1"/>
    <property type="match status" value="1"/>
</dbReference>
<gene>
    <name evidence="2" type="primary">deoD</name>
    <name type="ordered locus">SPP_0842</name>
</gene>
<feature type="chain" id="PRO_1000186239" description="Purine nucleoside phosphorylase DeoD-type">
    <location>
        <begin position="1"/>
        <end position="236"/>
    </location>
</feature>
<feature type="active site" description="Proton donor" evidence="2">
    <location>
        <position position="204"/>
    </location>
</feature>
<feature type="binding site" evidence="1">
    <location>
        <position position="4"/>
    </location>
    <ligand>
        <name>a purine D-ribonucleoside</name>
        <dbReference type="ChEBI" id="CHEBI:142355"/>
        <note>ligand shared between dimeric partners</note>
    </ligand>
</feature>
<feature type="binding site" description="in other chain" evidence="1">
    <location>
        <position position="20"/>
    </location>
    <ligand>
        <name>phosphate</name>
        <dbReference type="ChEBI" id="CHEBI:43474"/>
        <note>ligand shared between dimeric partners</note>
    </ligand>
</feature>
<feature type="binding site" description="in other chain" evidence="1">
    <location>
        <position position="24"/>
    </location>
    <ligand>
        <name>phosphate</name>
        <dbReference type="ChEBI" id="CHEBI:43474"/>
        <note>ligand shared between dimeric partners</note>
    </ligand>
</feature>
<feature type="binding site" evidence="1">
    <location>
        <position position="43"/>
    </location>
    <ligand>
        <name>phosphate</name>
        <dbReference type="ChEBI" id="CHEBI:43474"/>
        <note>ligand shared between dimeric partners</note>
    </ligand>
</feature>
<feature type="binding site" description="in other chain" evidence="1">
    <location>
        <begin position="87"/>
        <end position="90"/>
    </location>
    <ligand>
        <name>phosphate</name>
        <dbReference type="ChEBI" id="CHEBI:43474"/>
        <note>ligand shared between dimeric partners</note>
    </ligand>
</feature>
<feature type="binding site" description="in other chain" evidence="1">
    <location>
        <begin position="179"/>
        <end position="181"/>
    </location>
    <ligand>
        <name>a purine D-ribonucleoside</name>
        <dbReference type="ChEBI" id="CHEBI:142355"/>
        <note>ligand shared between dimeric partners</note>
    </ligand>
</feature>
<feature type="binding site" description="in other chain" evidence="1">
    <location>
        <begin position="203"/>
        <end position="204"/>
    </location>
    <ligand>
        <name>a purine D-ribonucleoside</name>
        <dbReference type="ChEBI" id="CHEBI:142355"/>
        <note>ligand shared between dimeric partners</note>
    </ligand>
</feature>
<feature type="site" description="Important for catalytic activity" evidence="2">
    <location>
        <position position="218"/>
    </location>
</feature>
<accession>C1CJS5</accession>
<protein>
    <recommendedName>
        <fullName evidence="2">Purine nucleoside phosphorylase DeoD-type</fullName>
        <shortName evidence="2">PNP</shortName>
        <ecNumber evidence="2">2.4.2.1</ecNumber>
    </recommendedName>
</protein>
<proteinExistence type="inferred from homology"/>
<sequence>MSIHIAAQQGEIADKILLPGDPLRAKFIAENFLGDAVCFNEVRNMFGYTGTYKGHRVSVMGTGMGMPSISIYARELIVDYGVKKLIRVGTAGSLNEEVHVRELVLAQAAATNSNIVRNDWPQYDFPQIASFDLLDKAYHIAKELGMTTHVGNVLSSDVFYSNYFEKNIELGKWGVKAVEMEAAALYYLAAQYHVDALAIMTISDSLVNPDEDTTAEERQNTFTDMMKVGLETLIAE</sequence>
<name>DEOD_STRZP</name>
<organism>
    <name type="scientific">Streptococcus pneumoniae (strain P1031)</name>
    <dbReference type="NCBI Taxonomy" id="488223"/>
    <lineage>
        <taxon>Bacteria</taxon>
        <taxon>Bacillati</taxon>
        <taxon>Bacillota</taxon>
        <taxon>Bacilli</taxon>
        <taxon>Lactobacillales</taxon>
        <taxon>Streptococcaceae</taxon>
        <taxon>Streptococcus</taxon>
    </lineage>
</organism>